<evidence type="ECO:0000250" key="1"/>
<evidence type="ECO:0000255" key="2">
    <source>
        <dbReference type="HAMAP-Rule" id="MF_00403"/>
    </source>
</evidence>
<evidence type="ECO:0000256" key="3">
    <source>
        <dbReference type="SAM" id="MobiDB-lite"/>
    </source>
</evidence>
<evidence type="ECO:0000305" key="4"/>
<dbReference type="EMBL" id="AF222894">
    <property type="protein sequence ID" value="AAF30938.1"/>
    <property type="molecule type" value="Genomic_DNA"/>
</dbReference>
<dbReference type="RefSeq" id="WP_004026220.1">
    <property type="nucleotide sequence ID" value="NC_002162.1"/>
</dbReference>
<dbReference type="SMR" id="Q9PPW5"/>
<dbReference type="STRING" id="273119.UU525"/>
<dbReference type="EnsemblBacteria" id="AAF30938">
    <property type="protein sequence ID" value="AAF30938"/>
    <property type="gene ID" value="UU525"/>
</dbReference>
<dbReference type="GeneID" id="93849074"/>
<dbReference type="KEGG" id="uur:UU525"/>
<dbReference type="eggNOG" id="COG0048">
    <property type="taxonomic scope" value="Bacteria"/>
</dbReference>
<dbReference type="HOGENOM" id="CLU_104295_1_2_14"/>
<dbReference type="OrthoDB" id="9802366at2"/>
<dbReference type="Proteomes" id="UP000000423">
    <property type="component" value="Chromosome"/>
</dbReference>
<dbReference type="GO" id="GO:0015935">
    <property type="term" value="C:small ribosomal subunit"/>
    <property type="evidence" value="ECO:0007669"/>
    <property type="project" value="InterPro"/>
</dbReference>
<dbReference type="GO" id="GO:0019843">
    <property type="term" value="F:rRNA binding"/>
    <property type="evidence" value="ECO:0007669"/>
    <property type="project" value="UniProtKB-UniRule"/>
</dbReference>
<dbReference type="GO" id="GO:0003735">
    <property type="term" value="F:structural constituent of ribosome"/>
    <property type="evidence" value="ECO:0007669"/>
    <property type="project" value="InterPro"/>
</dbReference>
<dbReference type="GO" id="GO:0000049">
    <property type="term" value="F:tRNA binding"/>
    <property type="evidence" value="ECO:0007669"/>
    <property type="project" value="UniProtKB-UniRule"/>
</dbReference>
<dbReference type="GO" id="GO:0006412">
    <property type="term" value="P:translation"/>
    <property type="evidence" value="ECO:0007669"/>
    <property type="project" value="UniProtKB-UniRule"/>
</dbReference>
<dbReference type="CDD" id="cd03368">
    <property type="entry name" value="Ribosomal_S12"/>
    <property type="match status" value="1"/>
</dbReference>
<dbReference type="FunFam" id="2.40.50.140:FF:000099">
    <property type="entry name" value="Ribosomal protein S12, mitochondrial"/>
    <property type="match status" value="1"/>
</dbReference>
<dbReference type="Gene3D" id="2.40.50.140">
    <property type="entry name" value="Nucleic acid-binding proteins"/>
    <property type="match status" value="1"/>
</dbReference>
<dbReference type="HAMAP" id="MF_00403_B">
    <property type="entry name" value="Ribosomal_uS12_B"/>
    <property type="match status" value="1"/>
</dbReference>
<dbReference type="InterPro" id="IPR012340">
    <property type="entry name" value="NA-bd_OB-fold"/>
</dbReference>
<dbReference type="InterPro" id="IPR006032">
    <property type="entry name" value="Ribosomal_uS12"/>
</dbReference>
<dbReference type="InterPro" id="IPR005679">
    <property type="entry name" value="Ribosomal_uS12_bac"/>
</dbReference>
<dbReference type="NCBIfam" id="TIGR00981">
    <property type="entry name" value="rpsL_bact"/>
    <property type="match status" value="1"/>
</dbReference>
<dbReference type="PANTHER" id="PTHR11652">
    <property type="entry name" value="30S RIBOSOMAL PROTEIN S12 FAMILY MEMBER"/>
    <property type="match status" value="1"/>
</dbReference>
<dbReference type="Pfam" id="PF00164">
    <property type="entry name" value="Ribosom_S12_S23"/>
    <property type="match status" value="1"/>
</dbReference>
<dbReference type="PIRSF" id="PIRSF002133">
    <property type="entry name" value="Ribosomal_S12/S23"/>
    <property type="match status" value="1"/>
</dbReference>
<dbReference type="PRINTS" id="PR01034">
    <property type="entry name" value="RIBOSOMALS12"/>
</dbReference>
<dbReference type="SUPFAM" id="SSF50249">
    <property type="entry name" value="Nucleic acid-binding proteins"/>
    <property type="match status" value="1"/>
</dbReference>
<dbReference type="PROSITE" id="PS00055">
    <property type="entry name" value="RIBOSOMAL_S12"/>
    <property type="match status" value="1"/>
</dbReference>
<sequence>MPTIAQLIRNKRAPKVKKTKSPALLFTYNSLHKKTTKNPSPLKSGVCTRVGTMTPKKPNSALRKYAKVRLSNGFEVLAYIPGEGHNLQEHSVVVIRGGRVKDLPGVRYHIVRGAGDASGVEKRRQQRSLYGAKRPKKEASK</sequence>
<name>RS12_UREPA</name>
<keyword id="KW-0488">Methylation</keyword>
<keyword id="KW-1185">Reference proteome</keyword>
<keyword id="KW-0687">Ribonucleoprotein</keyword>
<keyword id="KW-0689">Ribosomal protein</keyword>
<keyword id="KW-0694">RNA-binding</keyword>
<keyword id="KW-0699">rRNA-binding</keyword>
<keyword id="KW-0820">tRNA-binding</keyword>
<protein>
    <recommendedName>
        <fullName evidence="2">Small ribosomal subunit protein uS12</fullName>
    </recommendedName>
    <alternativeName>
        <fullName evidence="4">30S ribosomal protein S12</fullName>
    </alternativeName>
</protein>
<comment type="function">
    <text evidence="2">With S4 and S5 plays an important role in translational accuracy.</text>
</comment>
<comment type="function">
    <text evidence="2">Interacts with and stabilizes bases of the 16S rRNA that are involved in tRNA selection in the A site and with the mRNA backbone. Located at the interface of the 30S and 50S subunits, it traverses the body of the 30S subunit contacting proteins on the other side and probably holding the rRNA structure together. The combined cluster of proteins S8, S12 and S17 appears to hold together the shoulder and platform of the 30S subunit.</text>
</comment>
<comment type="subunit">
    <text evidence="2">Part of the 30S ribosomal subunit. Contacts proteins S8 and S17. May interact with IF1 in the 30S initiation complex.</text>
</comment>
<comment type="similarity">
    <text evidence="2">Belongs to the universal ribosomal protein uS12 family.</text>
</comment>
<reference key="1">
    <citation type="journal article" date="2000" name="Nature">
        <title>The complete sequence of the mucosal pathogen Ureaplasma urealyticum.</title>
        <authorList>
            <person name="Glass J.I."/>
            <person name="Lefkowitz E.J."/>
            <person name="Glass J.S."/>
            <person name="Heiner C.R."/>
            <person name="Chen E.Y."/>
            <person name="Cassell G.H."/>
        </authorList>
    </citation>
    <scope>NUCLEOTIDE SEQUENCE [LARGE SCALE GENOMIC DNA]</scope>
    <source>
        <strain>ATCC 700970</strain>
    </source>
</reference>
<proteinExistence type="inferred from homology"/>
<accession>Q9PPW5</accession>
<feature type="chain" id="PRO_0000146349" description="Small ribosomal subunit protein uS12">
    <location>
        <begin position="1"/>
        <end position="141"/>
    </location>
</feature>
<feature type="region of interest" description="Disordered" evidence="3">
    <location>
        <begin position="115"/>
        <end position="141"/>
    </location>
</feature>
<feature type="modified residue" description="3-methylthioaspartic acid" evidence="1">
    <location>
        <position position="102"/>
    </location>
</feature>
<gene>
    <name evidence="2" type="primary">rpsL</name>
    <name evidence="2" type="synonym">rps12</name>
    <name type="ordered locus">UU525</name>
</gene>
<organism>
    <name type="scientific">Ureaplasma parvum serovar 3 (strain ATCC 700970)</name>
    <dbReference type="NCBI Taxonomy" id="273119"/>
    <lineage>
        <taxon>Bacteria</taxon>
        <taxon>Bacillati</taxon>
        <taxon>Mycoplasmatota</taxon>
        <taxon>Mycoplasmoidales</taxon>
        <taxon>Mycoplasmoidaceae</taxon>
        <taxon>Ureaplasma</taxon>
    </lineage>
</organism>